<gene>
    <name type="primary">Cbp20</name>
    <name type="ORF">GL12592</name>
</gene>
<keyword id="KW-0507">mRNA processing</keyword>
<keyword id="KW-0508">mRNA splicing</keyword>
<keyword id="KW-0539">Nucleus</keyword>
<keyword id="KW-1185">Reference proteome</keyword>
<keyword id="KW-0694">RNA-binding</keyword>
<keyword id="KW-0943">RNA-mediated gene silencing</keyword>
<organism>
    <name type="scientific">Drosophila persimilis</name>
    <name type="common">Fruit fly</name>
    <dbReference type="NCBI Taxonomy" id="7234"/>
    <lineage>
        <taxon>Eukaryota</taxon>
        <taxon>Metazoa</taxon>
        <taxon>Ecdysozoa</taxon>
        <taxon>Arthropoda</taxon>
        <taxon>Hexapoda</taxon>
        <taxon>Insecta</taxon>
        <taxon>Pterygota</taxon>
        <taxon>Neoptera</taxon>
        <taxon>Endopterygota</taxon>
        <taxon>Diptera</taxon>
        <taxon>Brachycera</taxon>
        <taxon>Muscomorpha</taxon>
        <taxon>Ephydroidea</taxon>
        <taxon>Drosophilidae</taxon>
        <taxon>Drosophila</taxon>
        <taxon>Sophophora</taxon>
    </lineage>
</organism>
<accession>B4GLK8</accession>
<feature type="chain" id="PRO_0000385268" description="Nuclear cap-binding protein subunit 2">
    <location>
        <begin position="1"/>
        <end position="154"/>
    </location>
</feature>
<feature type="domain" description="RRM" evidence="2">
    <location>
        <begin position="30"/>
        <end position="108"/>
    </location>
</feature>
<feature type="binding site" evidence="1">
    <location>
        <position position="10"/>
    </location>
    <ligand>
        <name>mRNA</name>
        <dbReference type="ChEBI" id="CHEBI:33699"/>
    </ligand>
    <ligandPart>
        <name>mRNA cap</name>
    </ligandPart>
</feature>
<feature type="binding site" evidence="1">
    <location>
        <position position="33"/>
    </location>
    <ligand>
        <name>mRNA</name>
        <dbReference type="ChEBI" id="CHEBI:33699"/>
    </ligand>
    <ligandPart>
        <name>mRNA cap</name>
    </ligandPart>
</feature>
<feature type="binding site" evidence="1">
    <location>
        <begin position="102"/>
        <end position="106"/>
    </location>
    <ligand>
        <name>mRNA</name>
        <dbReference type="ChEBI" id="CHEBI:33699"/>
    </ligand>
    <ligandPart>
        <name>mRNA cap</name>
    </ligandPart>
</feature>
<feature type="binding site" evidence="1">
    <location>
        <begin position="113"/>
        <end position="117"/>
    </location>
    <ligand>
        <name>mRNA</name>
        <dbReference type="ChEBI" id="CHEBI:33699"/>
    </ligand>
    <ligandPart>
        <name>mRNA cap</name>
    </ligandPart>
</feature>
<feature type="binding site" evidence="1">
    <location>
        <begin position="123"/>
        <end position="124"/>
    </location>
    <ligand>
        <name>mRNA</name>
        <dbReference type="ChEBI" id="CHEBI:33699"/>
    </ligand>
    <ligandPart>
        <name>mRNA cap</name>
    </ligandPart>
</feature>
<reference key="1">
    <citation type="journal article" date="2007" name="Nature">
        <title>Evolution of genes and genomes on the Drosophila phylogeny.</title>
        <authorList>
            <consortium name="Drosophila 12 genomes consortium"/>
        </authorList>
    </citation>
    <scope>NUCLEOTIDE SEQUENCE [LARGE SCALE GENOMIC DNA]</scope>
    <source>
        <strain>MSH-3 / Tucson 14011-0111.49</strain>
    </source>
</reference>
<sequence length="154" mass="17688">MATSVELSSYRDQHFKGSRSEQERSLKDSCTLYVGNLSFYTTEEQIHELFSRCGDVRLIVMGLDKYKKTPCGFCFVEYYIRSEAESAMRFVNGTRLDDRLIRVDWDAGFIEGRQYGRGKTGGQVRDEYRTDYDAGRGGYGKLLSLKIAPNTDNR</sequence>
<dbReference type="EMBL" id="CH479185">
    <property type="protein sequence ID" value="EDW38432.1"/>
    <property type="molecule type" value="Genomic_DNA"/>
</dbReference>
<dbReference type="SMR" id="B4GLK8"/>
<dbReference type="STRING" id="7234.B4GLK8"/>
<dbReference type="EnsemblMetazoa" id="FBtr0178207">
    <property type="protein sequence ID" value="FBpp0176699"/>
    <property type="gene ID" value="FBgn0150198"/>
</dbReference>
<dbReference type="EnsemblMetazoa" id="XM_002019762.2">
    <property type="protein sequence ID" value="XP_002019798.1"/>
    <property type="gene ID" value="LOC6594300"/>
</dbReference>
<dbReference type="GeneID" id="6594300"/>
<dbReference type="KEGG" id="dpe:6594300"/>
<dbReference type="CTD" id="42166"/>
<dbReference type="eggNOG" id="KOG0121">
    <property type="taxonomic scope" value="Eukaryota"/>
</dbReference>
<dbReference type="HOGENOM" id="CLU_070952_2_0_1"/>
<dbReference type="OMA" id="DIRRIIM"/>
<dbReference type="OrthoDB" id="201398at2759"/>
<dbReference type="PhylomeDB" id="B4GLK8"/>
<dbReference type="Proteomes" id="UP000008744">
    <property type="component" value="Unassembled WGS sequence"/>
</dbReference>
<dbReference type="GO" id="GO:0005846">
    <property type="term" value="C:nuclear cap binding complex"/>
    <property type="evidence" value="ECO:0007669"/>
    <property type="project" value="InterPro"/>
</dbReference>
<dbReference type="GO" id="GO:0005634">
    <property type="term" value="C:nucleus"/>
    <property type="evidence" value="ECO:0007669"/>
    <property type="project" value="UniProtKB-SubCell"/>
</dbReference>
<dbReference type="GO" id="GO:0099523">
    <property type="term" value="C:presynaptic cytosol"/>
    <property type="evidence" value="ECO:0007669"/>
    <property type="project" value="EnsemblMetazoa"/>
</dbReference>
<dbReference type="GO" id="GO:0000339">
    <property type="term" value="F:RNA cap binding"/>
    <property type="evidence" value="ECO:0007669"/>
    <property type="project" value="InterPro"/>
</dbReference>
<dbReference type="GO" id="GO:0045292">
    <property type="term" value="P:mRNA cis splicing, via spliceosome"/>
    <property type="evidence" value="ECO:0007669"/>
    <property type="project" value="InterPro"/>
</dbReference>
<dbReference type="GO" id="GO:0045071">
    <property type="term" value="P:negative regulation of viral genome replication"/>
    <property type="evidence" value="ECO:0007669"/>
    <property type="project" value="EnsemblMetazoa"/>
</dbReference>
<dbReference type="GO" id="GO:0031053">
    <property type="term" value="P:primary miRNA processing"/>
    <property type="evidence" value="ECO:0007669"/>
    <property type="project" value="EnsemblMetazoa"/>
</dbReference>
<dbReference type="GO" id="GO:0035194">
    <property type="term" value="P:regulatory ncRNA-mediated post-transcriptional gene silencing"/>
    <property type="evidence" value="ECO:0007669"/>
    <property type="project" value="EnsemblMetazoa"/>
</dbReference>
<dbReference type="GO" id="GO:0030422">
    <property type="term" value="P:siRNA processing"/>
    <property type="evidence" value="ECO:0007669"/>
    <property type="project" value="EnsemblMetazoa"/>
</dbReference>
<dbReference type="CDD" id="cd12240">
    <property type="entry name" value="RRM_NCBP2"/>
    <property type="match status" value="1"/>
</dbReference>
<dbReference type="FunFam" id="3.30.70.330:FF:000128">
    <property type="entry name" value="Nuclear cap-binding protein subunit 2"/>
    <property type="match status" value="1"/>
</dbReference>
<dbReference type="Gene3D" id="3.30.70.330">
    <property type="match status" value="1"/>
</dbReference>
<dbReference type="InterPro" id="IPR027157">
    <property type="entry name" value="NCBP2"/>
</dbReference>
<dbReference type="InterPro" id="IPR034148">
    <property type="entry name" value="NCBP2_RRM"/>
</dbReference>
<dbReference type="InterPro" id="IPR012677">
    <property type="entry name" value="Nucleotide-bd_a/b_plait_sf"/>
</dbReference>
<dbReference type="InterPro" id="IPR035979">
    <property type="entry name" value="RBD_domain_sf"/>
</dbReference>
<dbReference type="InterPro" id="IPR000504">
    <property type="entry name" value="RRM_dom"/>
</dbReference>
<dbReference type="PANTHER" id="PTHR18847">
    <property type="entry name" value="20 KD NUCLEAR CAP BINDING PROTEIN"/>
    <property type="match status" value="1"/>
</dbReference>
<dbReference type="PANTHER" id="PTHR18847:SF0">
    <property type="entry name" value="NUCLEAR CAP-BINDING PROTEIN SUBUNIT 2"/>
    <property type="match status" value="1"/>
</dbReference>
<dbReference type="Pfam" id="PF00076">
    <property type="entry name" value="RRM_1"/>
    <property type="match status" value="1"/>
</dbReference>
<dbReference type="SMART" id="SM00360">
    <property type="entry name" value="RRM"/>
    <property type="match status" value="1"/>
</dbReference>
<dbReference type="SUPFAM" id="SSF54928">
    <property type="entry name" value="RNA-binding domain, RBD"/>
    <property type="match status" value="1"/>
</dbReference>
<dbReference type="PROSITE" id="PS50102">
    <property type="entry name" value="RRM"/>
    <property type="match status" value="1"/>
</dbReference>
<name>NCBP2_DROPE</name>
<proteinExistence type="inferred from homology"/>
<comment type="function">
    <text evidence="1">Component of the cap-binding complex (CBC), which binds co-transcriptionally to the 5' cap of pre-mRNAs and is involved in various processes such as pre-mRNA splicing and RNA-mediated gene silencing (RNAi). The CBC complex is involved in miRNA-mediated RNA interference via its interaction with Ars2 and is required for primary microRNAs (miRNAs) processing. Also involved in innate immunity via the short interfering RNAs (siRNAs) processing machinery by restricting the viral RNA production. In the CBC complex, Cbp20 recognizes and binds capped RNAs (m7GpppG-capped RNA) but requires Cbp80 to stabilize the movement of its N-terminal loop and lock the CBC into a high affinity cap-binding state with the cap structure (By similarity).</text>
</comment>
<comment type="subunit">
    <text evidence="1">Component of the nuclear cap-binding complex (CBC), a heterodimer composed of Cbp80 and Cbp20 that interacts with m7GpppG-capped RNA. Interacts with Ars2 (By similarity).</text>
</comment>
<comment type="subcellular location">
    <subcellularLocation>
        <location evidence="1">Nucleus</location>
    </subcellularLocation>
</comment>
<comment type="similarity">
    <text evidence="3">Belongs to the RRM NCBP2 family.</text>
</comment>
<evidence type="ECO:0000250" key="1"/>
<evidence type="ECO:0000255" key="2">
    <source>
        <dbReference type="PROSITE-ProRule" id="PRU00176"/>
    </source>
</evidence>
<evidence type="ECO:0000305" key="3"/>
<protein>
    <recommendedName>
        <fullName>Nuclear cap-binding protein subunit 2</fullName>
    </recommendedName>
    <alternativeName>
        <fullName>20 kDa nuclear cap-binding protein</fullName>
    </alternativeName>
    <alternativeName>
        <fullName>NCBP 20 kDa subunit</fullName>
        <shortName>CBP20</shortName>
    </alternativeName>
</protein>